<organism>
    <name type="scientific">Guillardia theta</name>
    <name type="common">Cryptophyte</name>
    <name type="synonym">Cryptomonas phi</name>
    <dbReference type="NCBI Taxonomy" id="55529"/>
    <lineage>
        <taxon>Eukaryota</taxon>
        <taxon>Cryptophyceae</taxon>
        <taxon>Pyrenomonadales</taxon>
        <taxon>Geminigeraceae</taxon>
        <taxon>Guillardia</taxon>
    </lineage>
</organism>
<sequence>MFNVQFDIFNFSNNITFLTLLISLISYWLGLIFKKIKNVFYIGYGSTILACITITIILGTRWIESGYFPLSNLYESLMFLTWGLLFSAIYLEYKTNLYLIGAIVSPISLFIVSFSTLSLPQDMQKAAPLVPALKSNWLMMHVSVMMLSYSTLIIGSLLAILYLVLIKAQQKKHSLKDFAFANLEFTFPKSTNSTNFNLLETLDNLSYRTIGFGFPLLTIGIIAGAVWANEAWGTYWSWDPKETWALITWLVFAAYLHARITKSWTGERPAYLAALGFVVVWICYLGVNFLGKGLHSYGWLN</sequence>
<protein>
    <recommendedName>
        <fullName evidence="1">Cytochrome c biogenesis protein CcsA</fullName>
    </recommendedName>
</protein>
<proteinExistence type="inferred from homology"/>
<reference key="1">
    <citation type="journal article" date="1990" name="Plant Mol. Biol.">
        <title>Localization of beta-phycoerythrin to the thylakoid lumen of Cryptomonas phi does not involve a signal peptide.</title>
        <authorList>
            <person name="Reith M."/>
            <person name="Douglas S.E."/>
        </authorList>
    </citation>
    <scope>NUCLEOTIDE SEQUENCE [GENOMIC DNA]</scope>
</reference>
<reference key="2">
    <citation type="journal article" date="1999" name="J. Mol. Evol.">
        <title>The plastid genome of the cryptophyte alga, Guillardia theta: complete sequence and conserved synteny groups confirm its common ancestry with red algae.</title>
        <authorList>
            <person name="Douglas S.E."/>
            <person name="Penny S.L."/>
        </authorList>
    </citation>
    <scope>NUCLEOTIDE SEQUENCE [LARGE SCALE GENOMIC DNA]</scope>
</reference>
<accession>P22554</accession>
<comment type="function">
    <text evidence="1">Required during biogenesis of c-type cytochromes (cytochrome c6 and cytochrome f) at the step of heme attachment.</text>
</comment>
<comment type="subunit">
    <text evidence="1">May interact with Ccs1.</text>
</comment>
<comment type="subcellular location">
    <subcellularLocation>
        <location evidence="1">Plastid</location>
        <location evidence="1">Chloroplast thylakoid membrane</location>
        <topology evidence="1">Multi-pass membrane protein</topology>
    </subcellularLocation>
</comment>
<comment type="similarity">
    <text evidence="1">Belongs to the CcmF/CycK/Ccl1/NrfE/CcsA family.</text>
</comment>
<evidence type="ECO:0000255" key="1">
    <source>
        <dbReference type="HAMAP-Rule" id="MF_01391"/>
    </source>
</evidence>
<keyword id="KW-0150">Chloroplast</keyword>
<keyword id="KW-0201">Cytochrome c-type biogenesis</keyword>
<keyword id="KW-0472">Membrane</keyword>
<keyword id="KW-0934">Plastid</keyword>
<keyword id="KW-0793">Thylakoid</keyword>
<keyword id="KW-0812">Transmembrane</keyword>
<keyword id="KW-1133">Transmembrane helix</keyword>
<dbReference type="EMBL" id="X52159">
    <property type="protein sequence ID" value="CAA36413.1"/>
    <property type="molecule type" value="Genomic_DNA"/>
</dbReference>
<dbReference type="EMBL" id="AF041468">
    <property type="protein sequence ID" value="AAC35630.1"/>
    <property type="molecule type" value="Genomic_DNA"/>
</dbReference>
<dbReference type="RefSeq" id="NP_050696.1">
    <property type="nucleotide sequence ID" value="NC_000926.1"/>
</dbReference>
<dbReference type="SMR" id="P22554"/>
<dbReference type="GeneID" id="856987"/>
<dbReference type="HOGENOM" id="CLU_049710_2_2_1"/>
<dbReference type="OMA" id="YESLCFL"/>
<dbReference type="GO" id="GO:0009535">
    <property type="term" value="C:chloroplast thylakoid membrane"/>
    <property type="evidence" value="ECO:0007669"/>
    <property type="project" value="UniProtKB-SubCell"/>
</dbReference>
<dbReference type="GO" id="GO:0005886">
    <property type="term" value="C:plasma membrane"/>
    <property type="evidence" value="ECO:0007669"/>
    <property type="project" value="TreeGrafter"/>
</dbReference>
<dbReference type="GO" id="GO:0020037">
    <property type="term" value="F:heme binding"/>
    <property type="evidence" value="ECO:0007669"/>
    <property type="project" value="InterPro"/>
</dbReference>
<dbReference type="GO" id="GO:0017004">
    <property type="term" value="P:cytochrome complex assembly"/>
    <property type="evidence" value="ECO:0007669"/>
    <property type="project" value="UniProtKB-UniRule"/>
</dbReference>
<dbReference type="HAMAP" id="MF_01391">
    <property type="entry name" value="CytC_CcsA"/>
    <property type="match status" value="1"/>
</dbReference>
<dbReference type="InterPro" id="IPR002541">
    <property type="entry name" value="Cyt_c_assembly"/>
</dbReference>
<dbReference type="InterPro" id="IPR017562">
    <property type="entry name" value="Cyt_c_biogenesis_CcsA"/>
</dbReference>
<dbReference type="InterPro" id="IPR045062">
    <property type="entry name" value="Cyt_c_biogenesis_CcsA/CcmC"/>
</dbReference>
<dbReference type="NCBIfam" id="TIGR03144">
    <property type="entry name" value="cytochr_II_ccsB"/>
    <property type="match status" value="1"/>
</dbReference>
<dbReference type="PANTHER" id="PTHR30071:SF1">
    <property type="entry name" value="CYTOCHROME B_B6 PROTEIN-RELATED"/>
    <property type="match status" value="1"/>
</dbReference>
<dbReference type="PANTHER" id="PTHR30071">
    <property type="entry name" value="HEME EXPORTER PROTEIN C"/>
    <property type="match status" value="1"/>
</dbReference>
<dbReference type="Pfam" id="PF01578">
    <property type="entry name" value="Cytochrom_C_asm"/>
    <property type="match status" value="1"/>
</dbReference>
<name>CCSA_GUITH</name>
<feature type="chain" id="PRO_0000201604" description="Cytochrome c biogenesis protein CcsA">
    <location>
        <begin position="1"/>
        <end position="301"/>
    </location>
</feature>
<feature type="transmembrane region" description="Helical" evidence="1">
    <location>
        <begin position="13"/>
        <end position="33"/>
    </location>
</feature>
<feature type="transmembrane region" description="Helical" evidence="1">
    <location>
        <begin position="39"/>
        <end position="59"/>
    </location>
</feature>
<feature type="transmembrane region" description="Helical" evidence="1">
    <location>
        <begin position="73"/>
        <end position="93"/>
    </location>
</feature>
<feature type="transmembrane region" description="Helical" evidence="1">
    <location>
        <begin position="97"/>
        <end position="117"/>
    </location>
</feature>
<feature type="transmembrane region" description="Helical" evidence="1">
    <location>
        <begin position="146"/>
        <end position="166"/>
    </location>
</feature>
<feature type="transmembrane region" description="Helical" evidence="1">
    <location>
        <begin position="209"/>
        <end position="229"/>
    </location>
</feature>
<feature type="transmembrane region" description="Helical" evidence="1">
    <location>
        <begin position="236"/>
        <end position="256"/>
    </location>
</feature>
<feature type="transmembrane region" description="Helical" evidence="1">
    <location>
        <begin position="270"/>
        <end position="290"/>
    </location>
</feature>
<geneLocation type="chloroplast"/>
<gene>
    <name evidence="1" type="primary">ccsA</name>
</gene>